<organism>
    <name type="scientific">Legionella pneumophila (strain Lens)</name>
    <dbReference type="NCBI Taxonomy" id="297245"/>
    <lineage>
        <taxon>Bacteria</taxon>
        <taxon>Pseudomonadati</taxon>
        <taxon>Pseudomonadota</taxon>
        <taxon>Gammaproteobacteria</taxon>
        <taxon>Legionellales</taxon>
        <taxon>Legionellaceae</taxon>
        <taxon>Legionella</taxon>
    </lineage>
</organism>
<name>NRDR_LEGPL</name>
<evidence type="ECO:0000255" key="1">
    <source>
        <dbReference type="HAMAP-Rule" id="MF_00440"/>
    </source>
</evidence>
<reference key="1">
    <citation type="journal article" date="2004" name="Nat. Genet.">
        <title>Evidence in the Legionella pneumophila genome for exploitation of host cell functions and high genome plasticity.</title>
        <authorList>
            <person name="Cazalet C."/>
            <person name="Rusniok C."/>
            <person name="Brueggemann H."/>
            <person name="Zidane N."/>
            <person name="Magnier A."/>
            <person name="Ma L."/>
            <person name="Tichit M."/>
            <person name="Jarraud S."/>
            <person name="Bouchier C."/>
            <person name="Vandenesch F."/>
            <person name="Kunst F."/>
            <person name="Etienne J."/>
            <person name="Glaser P."/>
            <person name="Buchrieser C."/>
        </authorList>
    </citation>
    <scope>NUCLEOTIDE SEQUENCE [LARGE SCALE GENOMIC DNA]</scope>
    <source>
        <strain>Lens</strain>
    </source>
</reference>
<protein>
    <recommendedName>
        <fullName evidence="1">Transcriptional repressor NrdR</fullName>
    </recommendedName>
</protein>
<dbReference type="EMBL" id="CR628337">
    <property type="protein sequence ID" value="CAH14997.1"/>
    <property type="molecule type" value="Genomic_DNA"/>
</dbReference>
<dbReference type="RefSeq" id="WP_011214934.1">
    <property type="nucleotide sequence ID" value="NC_006369.1"/>
</dbReference>
<dbReference type="SMR" id="Q5WYH3"/>
<dbReference type="KEGG" id="lpf:lpl0763"/>
<dbReference type="LegioList" id="lpl0763"/>
<dbReference type="HOGENOM" id="CLU_108412_0_0_6"/>
<dbReference type="Proteomes" id="UP000002517">
    <property type="component" value="Chromosome"/>
</dbReference>
<dbReference type="GO" id="GO:0005524">
    <property type="term" value="F:ATP binding"/>
    <property type="evidence" value="ECO:0007669"/>
    <property type="project" value="UniProtKB-KW"/>
</dbReference>
<dbReference type="GO" id="GO:0003677">
    <property type="term" value="F:DNA binding"/>
    <property type="evidence" value="ECO:0007669"/>
    <property type="project" value="UniProtKB-KW"/>
</dbReference>
<dbReference type="GO" id="GO:0008270">
    <property type="term" value="F:zinc ion binding"/>
    <property type="evidence" value="ECO:0007669"/>
    <property type="project" value="UniProtKB-UniRule"/>
</dbReference>
<dbReference type="GO" id="GO:0045892">
    <property type="term" value="P:negative regulation of DNA-templated transcription"/>
    <property type="evidence" value="ECO:0007669"/>
    <property type="project" value="UniProtKB-UniRule"/>
</dbReference>
<dbReference type="HAMAP" id="MF_00440">
    <property type="entry name" value="NrdR"/>
    <property type="match status" value="1"/>
</dbReference>
<dbReference type="InterPro" id="IPR005144">
    <property type="entry name" value="ATP-cone_dom"/>
</dbReference>
<dbReference type="InterPro" id="IPR055173">
    <property type="entry name" value="NrdR-like_N"/>
</dbReference>
<dbReference type="InterPro" id="IPR003796">
    <property type="entry name" value="RNR_NrdR-like"/>
</dbReference>
<dbReference type="NCBIfam" id="TIGR00244">
    <property type="entry name" value="transcriptional regulator NrdR"/>
    <property type="match status" value="1"/>
</dbReference>
<dbReference type="PANTHER" id="PTHR30455">
    <property type="entry name" value="TRANSCRIPTIONAL REPRESSOR NRDR"/>
    <property type="match status" value="1"/>
</dbReference>
<dbReference type="PANTHER" id="PTHR30455:SF2">
    <property type="entry name" value="TRANSCRIPTIONAL REPRESSOR NRDR"/>
    <property type="match status" value="1"/>
</dbReference>
<dbReference type="Pfam" id="PF03477">
    <property type="entry name" value="ATP-cone"/>
    <property type="match status" value="1"/>
</dbReference>
<dbReference type="Pfam" id="PF22811">
    <property type="entry name" value="Zn_ribbon_NrdR"/>
    <property type="match status" value="1"/>
</dbReference>
<dbReference type="PROSITE" id="PS51161">
    <property type="entry name" value="ATP_CONE"/>
    <property type="match status" value="1"/>
</dbReference>
<comment type="function">
    <text evidence="1">Negatively regulates transcription of bacterial ribonucleotide reductase nrd genes and operons by binding to NrdR-boxes.</text>
</comment>
<comment type="cofactor">
    <cofactor evidence="1">
        <name>Zn(2+)</name>
        <dbReference type="ChEBI" id="CHEBI:29105"/>
    </cofactor>
    <text evidence="1">Binds 1 zinc ion.</text>
</comment>
<comment type="similarity">
    <text evidence="1">Belongs to the NrdR family.</text>
</comment>
<gene>
    <name evidence="1" type="primary">nrdR</name>
    <name type="ordered locus">lpl0763</name>
</gene>
<feature type="chain" id="PRO_0000182309" description="Transcriptional repressor NrdR">
    <location>
        <begin position="1"/>
        <end position="155"/>
    </location>
</feature>
<feature type="domain" description="ATP-cone" evidence="1">
    <location>
        <begin position="49"/>
        <end position="139"/>
    </location>
</feature>
<feature type="zinc finger region" evidence="1">
    <location>
        <begin position="3"/>
        <end position="34"/>
    </location>
</feature>
<keyword id="KW-0067">ATP-binding</keyword>
<keyword id="KW-0238">DNA-binding</keyword>
<keyword id="KW-0479">Metal-binding</keyword>
<keyword id="KW-0547">Nucleotide-binding</keyword>
<keyword id="KW-0678">Repressor</keyword>
<keyword id="KW-0804">Transcription</keyword>
<keyword id="KW-0805">Transcription regulation</keyword>
<keyword id="KW-0862">Zinc</keyword>
<keyword id="KW-0863">Zinc-finger</keyword>
<proteinExistence type="inferred from homology"/>
<sequence length="155" mass="18396">MYCPFCHAEETKVVDSRLVADGAQVRRRRECLECHERFTTFETAELIMPLIIKRDGRREPFHIDNLRSGMLRALEKRPVSVDDLEKAIISITEEIRRRGEREIDSQMVGELVMKELFRLDHVAYVRFASVYKRFKDVSDFRQTIDQMKNEDKEKS</sequence>
<accession>Q5WYH3</accession>